<reference key="1">
    <citation type="journal article" date="2008" name="J. Bacteriol.">
        <title>Complete genome sequence of uropathogenic Proteus mirabilis, a master of both adherence and motility.</title>
        <authorList>
            <person name="Pearson M.M."/>
            <person name="Sebaihia M."/>
            <person name="Churcher C."/>
            <person name="Quail M.A."/>
            <person name="Seshasayee A.S."/>
            <person name="Luscombe N.M."/>
            <person name="Abdellah Z."/>
            <person name="Arrosmith C."/>
            <person name="Atkin B."/>
            <person name="Chillingworth T."/>
            <person name="Hauser H."/>
            <person name="Jagels K."/>
            <person name="Moule S."/>
            <person name="Mungall K."/>
            <person name="Norbertczak H."/>
            <person name="Rabbinowitsch E."/>
            <person name="Walker D."/>
            <person name="Whithead S."/>
            <person name="Thomson N.R."/>
            <person name="Rather P.N."/>
            <person name="Parkhill J."/>
            <person name="Mobley H.L.T."/>
        </authorList>
    </citation>
    <scope>NUCLEOTIDE SEQUENCE [LARGE SCALE GENOMIC DNA]</scope>
    <source>
        <strain>HI4320</strain>
    </source>
</reference>
<accession>B4F271</accession>
<gene>
    <name evidence="1" type="primary">purA</name>
    <name type="ordered locus">PMI3370</name>
</gene>
<feature type="chain" id="PRO_1000089325" description="Adenylosuccinate synthetase">
    <location>
        <begin position="1"/>
        <end position="432"/>
    </location>
</feature>
<feature type="active site" description="Proton acceptor" evidence="1">
    <location>
        <position position="14"/>
    </location>
</feature>
<feature type="active site" description="Proton donor" evidence="1">
    <location>
        <position position="42"/>
    </location>
</feature>
<feature type="binding site" evidence="1">
    <location>
        <begin position="13"/>
        <end position="19"/>
    </location>
    <ligand>
        <name>GTP</name>
        <dbReference type="ChEBI" id="CHEBI:37565"/>
    </ligand>
</feature>
<feature type="binding site" description="in other chain" evidence="1">
    <location>
        <begin position="14"/>
        <end position="17"/>
    </location>
    <ligand>
        <name>IMP</name>
        <dbReference type="ChEBI" id="CHEBI:58053"/>
        <note>ligand shared between dimeric partners</note>
    </ligand>
</feature>
<feature type="binding site" evidence="1">
    <location>
        <position position="14"/>
    </location>
    <ligand>
        <name>Mg(2+)</name>
        <dbReference type="ChEBI" id="CHEBI:18420"/>
    </ligand>
</feature>
<feature type="binding site" description="in other chain" evidence="1">
    <location>
        <begin position="39"/>
        <end position="42"/>
    </location>
    <ligand>
        <name>IMP</name>
        <dbReference type="ChEBI" id="CHEBI:58053"/>
        <note>ligand shared between dimeric partners</note>
    </ligand>
</feature>
<feature type="binding site" evidence="1">
    <location>
        <begin position="41"/>
        <end position="43"/>
    </location>
    <ligand>
        <name>GTP</name>
        <dbReference type="ChEBI" id="CHEBI:37565"/>
    </ligand>
</feature>
<feature type="binding site" evidence="1">
    <location>
        <position position="41"/>
    </location>
    <ligand>
        <name>Mg(2+)</name>
        <dbReference type="ChEBI" id="CHEBI:18420"/>
    </ligand>
</feature>
<feature type="binding site" description="in other chain" evidence="1">
    <location>
        <position position="130"/>
    </location>
    <ligand>
        <name>IMP</name>
        <dbReference type="ChEBI" id="CHEBI:58053"/>
        <note>ligand shared between dimeric partners</note>
    </ligand>
</feature>
<feature type="binding site" evidence="1">
    <location>
        <position position="144"/>
    </location>
    <ligand>
        <name>IMP</name>
        <dbReference type="ChEBI" id="CHEBI:58053"/>
        <note>ligand shared between dimeric partners</note>
    </ligand>
</feature>
<feature type="binding site" description="in other chain" evidence="1">
    <location>
        <position position="225"/>
    </location>
    <ligand>
        <name>IMP</name>
        <dbReference type="ChEBI" id="CHEBI:58053"/>
        <note>ligand shared between dimeric partners</note>
    </ligand>
</feature>
<feature type="binding site" description="in other chain" evidence="1">
    <location>
        <position position="240"/>
    </location>
    <ligand>
        <name>IMP</name>
        <dbReference type="ChEBI" id="CHEBI:58053"/>
        <note>ligand shared between dimeric partners</note>
    </ligand>
</feature>
<feature type="binding site" evidence="1">
    <location>
        <begin position="300"/>
        <end position="306"/>
    </location>
    <ligand>
        <name>substrate</name>
    </ligand>
</feature>
<feature type="binding site" description="in other chain" evidence="1">
    <location>
        <position position="304"/>
    </location>
    <ligand>
        <name>IMP</name>
        <dbReference type="ChEBI" id="CHEBI:58053"/>
        <note>ligand shared between dimeric partners</note>
    </ligand>
</feature>
<feature type="binding site" evidence="1">
    <location>
        <position position="306"/>
    </location>
    <ligand>
        <name>GTP</name>
        <dbReference type="ChEBI" id="CHEBI:37565"/>
    </ligand>
</feature>
<feature type="binding site" evidence="1">
    <location>
        <begin position="332"/>
        <end position="334"/>
    </location>
    <ligand>
        <name>GTP</name>
        <dbReference type="ChEBI" id="CHEBI:37565"/>
    </ligand>
</feature>
<feature type="binding site" evidence="1">
    <location>
        <begin position="415"/>
        <end position="417"/>
    </location>
    <ligand>
        <name>GTP</name>
        <dbReference type="ChEBI" id="CHEBI:37565"/>
    </ligand>
</feature>
<proteinExistence type="inferred from homology"/>
<dbReference type="EC" id="6.3.4.4" evidence="1"/>
<dbReference type="EMBL" id="AM942759">
    <property type="protein sequence ID" value="CAR46608.1"/>
    <property type="molecule type" value="Genomic_DNA"/>
</dbReference>
<dbReference type="RefSeq" id="WP_004249629.1">
    <property type="nucleotide sequence ID" value="NC_010554.1"/>
</dbReference>
<dbReference type="SMR" id="B4F271"/>
<dbReference type="EnsemblBacteria" id="CAR46608">
    <property type="protein sequence ID" value="CAR46608"/>
    <property type="gene ID" value="PMI3370"/>
</dbReference>
<dbReference type="GeneID" id="6801599"/>
<dbReference type="KEGG" id="pmr:PMI3370"/>
<dbReference type="eggNOG" id="COG0104">
    <property type="taxonomic scope" value="Bacteria"/>
</dbReference>
<dbReference type="HOGENOM" id="CLU_029848_0_0_6"/>
<dbReference type="UniPathway" id="UPA00075">
    <property type="reaction ID" value="UER00335"/>
</dbReference>
<dbReference type="Proteomes" id="UP000008319">
    <property type="component" value="Chromosome"/>
</dbReference>
<dbReference type="GO" id="GO:0005737">
    <property type="term" value="C:cytoplasm"/>
    <property type="evidence" value="ECO:0007669"/>
    <property type="project" value="UniProtKB-SubCell"/>
</dbReference>
<dbReference type="GO" id="GO:0004019">
    <property type="term" value="F:adenylosuccinate synthase activity"/>
    <property type="evidence" value="ECO:0007669"/>
    <property type="project" value="UniProtKB-UniRule"/>
</dbReference>
<dbReference type="GO" id="GO:0005525">
    <property type="term" value="F:GTP binding"/>
    <property type="evidence" value="ECO:0007669"/>
    <property type="project" value="UniProtKB-UniRule"/>
</dbReference>
<dbReference type="GO" id="GO:0000287">
    <property type="term" value="F:magnesium ion binding"/>
    <property type="evidence" value="ECO:0007669"/>
    <property type="project" value="UniProtKB-UniRule"/>
</dbReference>
<dbReference type="GO" id="GO:0044208">
    <property type="term" value="P:'de novo' AMP biosynthetic process"/>
    <property type="evidence" value="ECO:0007669"/>
    <property type="project" value="UniProtKB-UniRule"/>
</dbReference>
<dbReference type="GO" id="GO:0046040">
    <property type="term" value="P:IMP metabolic process"/>
    <property type="evidence" value="ECO:0007669"/>
    <property type="project" value="TreeGrafter"/>
</dbReference>
<dbReference type="CDD" id="cd03108">
    <property type="entry name" value="AdSS"/>
    <property type="match status" value="1"/>
</dbReference>
<dbReference type="FunFam" id="1.10.300.10:FF:000001">
    <property type="entry name" value="Adenylosuccinate synthetase"/>
    <property type="match status" value="1"/>
</dbReference>
<dbReference type="FunFam" id="3.90.170.10:FF:000001">
    <property type="entry name" value="Adenylosuccinate synthetase"/>
    <property type="match status" value="1"/>
</dbReference>
<dbReference type="Gene3D" id="3.40.440.10">
    <property type="entry name" value="Adenylosuccinate Synthetase, subunit A, domain 1"/>
    <property type="match status" value="1"/>
</dbReference>
<dbReference type="Gene3D" id="1.10.300.10">
    <property type="entry name" value="Adenylosuccinate Synthetase, subunit A, domain 2"/>
    <property type="match status" value="1"/>
</dbReference>
<dbReference type="Gene3D" id="3.90.170.10">
    <property type="entry name" value="Adenylosuccinate Synthetase, subunit A, domain 3"/>
    <property type="match status" value="1"/>
</dbReference>
<dbReference type="HAMAP" id="MF_00011">
    <property type="entry name" value="Adenylosucc_synth"/>
    <property type="match status" value="1"/>
</dbReference>
<dbReference type="InterPro" id="IPR018220">
    <property type="entry name" value="Adenylosuccin_syn_GTP-bd"/>
</dbReference>
<dbReference type="InterPro" id="IPR033128">
    <property type="entry name" value="Adenylosuccin_syn_Lys_AS"/>
</dbReference>
<dbReference type="InterPro" id="IPR042109">
    <property type="entry name" value="Adenylosuccinate_synth_dom1"/>
</dbReference>
<dbReference type="InterPro" id="IPR042110">
    <property type="entry name" value="Adenylosuccinate_synth_dom2"/>
</dbReference>
<dbReference type="InterPro" id="IPR042111">
    <property type="entry name" value="Adenylosuccinate_synth_dom3"/>
</dbReference>
<dbReference type="InterPro" id="IPR001114">
    <property type="entry name" value="Adenylosuccinate_synthetase"/>
</dbReference>
<dbReference type="InterPro" id="IPR027417">
    <property type="entry name" value="P-loop_NTPase"/>
</dbReference>
<dbReference type="NCBIfam" id="NF002223">
    <property type="entry name" value="PRK01117.1"/>
    <property type="match status" value="1"/>
</dbReference>
<dbReference type="NCBIfam" id="TIGR00184">
    <property type="entry name" value="purA"/>
    <property type="match status" value="1"/>
</dbReference>
<dbReference type="PANTHER" id="PTHR11846">
    <property type="entry name" value="ADENYLOSUCCINATE SYNTHETASE"/>
    <property type="match status" value="1"/>
</dbReference>
<dbReference type="PANTHER" id="PTHR11846:SF0">
    <property type="entry name" value="ADENYLOSUCCINATE SYNTHETASE"/>
    <property type="match status" value="1"/>
</dbReference>
<dbReference type="Pfam" id="PF00709">
    <property type="entry name" value="Adenylsucc_synt"/>
    <property type="match status" value="1"/>
</dbReference>
<dbReference type="SMART" id="SM00788">
    <property type="entry name" value="Adenylsucc_synt"/>
    <property type="match status" value="1"/>
</dbReference>
<dbReference type="SUPFAM" id="SSF52540">
    <property type="entry name" value="P-loop containing nucleoside triphosphate hydrolases"/>
    <property type="match status" value="1"/>
</dbReference>
<dbReference type="PROSITE" id="PS01266">
    <property type="entry name" value="ADENYLOSUCCIN_SYN_1"/>
    <property type="match status" value="1"/>
</dbReference>
<dbReference type="PROSITE" id="PS00513">
    <property type="entry name" value="ADENYLOSUCCIN_SYN_2"/>
    <property type="match status" value="1"/>
</dbReference>
<comment type="function">
    <text evidence="1">Plays an important role in the de novo pathway of purine nucleotide biosynthesis. Catalyzes the first committed step in the biosynthesis of AMP from IMP.</text>
</comment>
<comment type="catalytic activity">
    <reaction evidence="1">
        <text>IMP + L-aspartate + GTP = N(6)-(1,2-dicarboxyethyl)-AMP + GDP + phosphate + 2 H(+)</text>
        <dbReference type="Rhea" id="RHEA:15753"/>
        <dbReference type="ChEBI" id="CHEBI:15378"/>
        <dbReference type="ChEBI" id="CHEBI:29991"/>
        <dbReference type="ChEBI" id="CHEBI:37565"/>
        <dbReference type="ChEBI" id="CHEBI:43474"/>
        <dbReference type="ChEBI" id="CHEBI:57567"/>
        <dbReference type="ChEBI" id="CHEBI:58053"/>
        <dbReference type="ChEBI" id="CHEBI:58189"/>
        <dbReference type="EC" id="6.3.4.4"/>
    </reaction>
</comment>
<comment type="cofactor">
    <cofactor evidence="1">
        <name>Mg(2+)</name>
        <dbReference type="ChEBI" id="CHEBI:18420"/>
    </cofactor>
    <text evidence="1">Binds 1 Mg(2+) ion per subunit.</text>
</comment>
<comment type="pathway">
    <text evidence="1">Purine metabolism; AMP biosynthesis via de novo pathway; AMP from IMP: step 1/2.</text>
</comment>
<comment type="subunit">
    <text evidence="1">Homodimer.</text>
</comment>
<comment type="subcellular location">
    <subcellularLocation>
        <location evidence="1">Cytoplasm</location>
    </subcellularLocation>
</comment>
<comment type="similarity">
    <text evidence="1">Belongs to the adenylosuccinate synthetase family.</text>
</comment>
<evidence type="ECO:0000255" key="1">
    <source>
        <dbReference type="HAMAP-Rule" id="MF_00011"/>
    </source>
</evidence>
<sequence length="432" mass="47331">MSNNVVVLGTQWGDEGKGKIVDLLTERAKYVVRYQGGHNAGHTLVIDGEKTVLHLIPSGILRENVVSIIANGVVLSPEALMKEMTQLEERGIPVRSRLLLSEACPLILPYHIALDNAREKARGEKAIGTTGRGIGPAYEDKVARRGLRVGDLFDKKAFAQKLKEIIEYHNFQLVNYYKVEPVDYQKTLDDIMAIADILTGMVVDVSDLLYKATQKGELVMFEGAQGTLLDIDHGTYPYVTSSNTTAGGVATGSGLGPRYVGYVLGIIKAYSTRVGAGPFPTELFDETGDFLREKGQEFGATTGRSRRTGWLDIIAIRRAVQINSLSGFCMTKLDVLDGLKEVKVCVGYRLPNGEVIETTPLAADDWEGIEPIYESMPGWNESTFGVKDKAQLPQAALNYIKRVEELTGVPVDIVSTGPDRSETIILRHPFDA</sequence>
<organism>
    <name type="scientific">Proteus mirabilis (strain HI4320)</name>
    <dbReference type="NCBI Taxonomy" id="529507"/>
    <lineage>
        <taxon>Bacteria</taxon>
        <taxon>Pseudomonadati</taxon>
        <taxon>Pseudomonadota</taxon>
        <taxon>Gammaproteobacteria</taxon>
        <taxon>Enterobacterales</taxon>
        <taxon>Morganellaceae</taxon>
        <taxon>Proteus</taxon>
    </lineage>
</organism>
<keyword id="KW-0963">Cytoplasm</keyword>
<keyword id="KW-0342">GTP-binding</keyword>
<keyword id="KW-0436">Ligase</keyword>
<keyword id="KW-0460">Magnesium</keyword>
<keyword id="KW-0479">Metal-binding</keyword>
<keyword id="KW-0547">Nucleotide-binding</keyword>
<keyword id="KW-0658">Purine biosynthesis</keyword>
<keyword id="KW-1185">Reference proteome</keyword>
<protein>
    <recommendedName>
        <fullName evidence="1">Adenylosuccinate synthetase</fullName>
        <shortName evidence="1">AMPSase</shortName>
        <shortName evidence="1">AdSS</shortName>
        <ecNumber evidence="1">6.3.4.4</ecNumber>
    </recommendedName>
    <alternativeName>
        <fullName evidence="1">IMP--aspartate ligase</fullName>
    </alternativeName>
</protein>
<name>PURA_PROMH</name>